<organism>
    <name type="scientific">Rattus norvegicus</name>
    <name type="common">Rat</name>
    <dbReference type="NCBI Taxonomy" id="10116"/>
    <lineage>
        <taxon>Eukaryota</taxon>
        <taxon>Metazoa</taxon>
        <taxon>Chordata</taxon>
        <taxon>Craniata</taxon>
        <taxon>Vertebrata</taxon>
        <taxon>Euteleostomi</taxon>
        <taxon>Mammalia</taxon>
        <taxon>Eutheria</taxon>
        <taxon>Euarchontoglires</taxon>
        <taxon>Glires</taxon>
        <taxon>Rodentia</taxon>
        <taxon>Myomorpha</taxon>
        <taxon>Muroidea</taxon>
        <taxon>Muridae</taxon>
        <taxon>Murinae</taxon>
        <taxon>Rattus</taxon>
    </lineage>
</organism>
<name>SERB_RAT</name>
<feature type="chain" id="PRO_0000156882" description="Phosphoserine phosphatase">
    <location>
        <begin position="1"/>
        <end position="225"/>
    </location>
</feature>
<feature type="active site" description="Nucleophile" evidence="1">
    <location>
        <position position="20"/>
    </location>
</feature>
<feature type="active site" description="Proton donor" evidence="1">
    <location>
        <position position="22"/>
    </location>
</feature>
<feature type="binding site" evidence="1">
    <location>
        <begin position="20"/>
        <end position="22"/>
    </location>
    <ligand>
        <name>L-serine</name>
        <dbReference type="ChEBI" id="CHEBI:33384"/>
    </ligand>
</feature>
<feature type="binding site" evidence="1">
    <location>
        <position position="20"/>
    </location>
    <ligand>
        <name>Mg(2+)</name>
        <dbReference type="ChEBI" id="CHEBI:18420"/>
    </ligand>
</feature>
<feature type="binding site" evidence="1">
    <location>
        <position position="22"/>
    </location>
    <ligand>
        <name>Mg(2+)</name>
        <dbReference type="ChEBI" id="CHEBI:18420"/>
    </ligand>
</feature>
<feature type="binding site" evidence="1">
    <location>
        <position position="52"/>
    </location>
    <ligand>
        <name>O-phospho-L-serine</name>
        <dbReference type="ChEBI" id="CHEBI:57524"/>
    </ligand>
</feature>
<feature type="binding site" evidence="1">
    <location>
        <position position="53"/>
    </location>
    <ligand>
        <name>phosphate</name>
        <dbReference type="ChEBI" id="CHEBI:43474"/>
    </ligand>
</feature>
<feature type="binding site" evidence="1">
    <location>
        <begin position="109"/>
        <end position="111"/>
    </location>
    <ligand>
        <name>L-serine</name>
        <dbReference type="ChEBI" id="CHEBI:33384"/>
    </ligand>
</feature>
<feature type="binding site" evidence="1">
    <location>
        <begin position="109"/>
        <end position="111"/>
    </location>
    <ligand>
        <name>O-phospho-L-serine</name>
        <dbReference type="ChEBI" id="CHEBI:57524"/>
    </ligand>
</feature>
<feature type="binding site" evidence="1">
    <location>
        <position position="158"/>
    </location>
    <ligand>
        <name>L-serine</name>
        <dbReference type="ChEBI" id="CHEBI:33384"/>
    </ligand>
</feature>
<feature type="binding site" evidence="1">
    <location>
        <position position="158"/>
    </location>
    <ligand>
        <name>O-phospho-L-serine</name>
        <dbReference type="ChEBI" id="CHEBI:57524"/>
    </ligand>
</feature>
<feature type="binding site" evidence="1">
    <location>
        <position position="179"/>
    </location>
    <ligand>
        <name>Mg(2+)</name>
        <dbReference type="ChEBI" id="CHEBI:18420"/>
    </ligand>
</feature>
<feature type="binding site" evidence="1">
    <location>
        <position position="182"/>
    </location>
    <ligand>
        <name>O-phospho-L-serine</name>
        <dbReference type="ChEBI" id="CHEBI:57524"/>
    </ligand>
</feature>
<feature type="binding site" evidence="1">
    <location>
        <position position="182"/>
    </location>
    <ligand>
        <name>phosphate</name>
        <dbReference type="ChEBI" id="CHEBI:43474"/>
    </ligand>
</feature>
<feature type="modified residue" description="N-acetylmethionine" evidence="1">
    <location>
        <position position="1"/>
    </location>
</feature>
<dbReference type="EC" id="3.1.3.3" evidence="1"/>
<dbReference type="EMBL" id="BC088310">
    <property type="protein sequence ID" value="AAH88310.1"/>
    <property type="molecule type" value="mRNA"/>
</dbReference>
<dbReference type="RefSeq" id="NP_001009679.1">
    <property type="nucleotide sequence ID" value="NM_001009679.1"/>
</dbReference>
<dbReference type="SMR" id="Q5M819"/>
<dbReference type="FunCoup" id="Q5M819">
    <property type="interactions" value="1160"/>
</dbReference>
<dbReference type="IntAct" id="Q5M819">
    <property type="interactions" value="1"/>
</dbReference>
<dbReference type="STRING" id="10116.ENSRNOP00000001228"/>
<dbReference type="iPTMnet" id="Q5M819"/>
<dbReference type="PhosphoSitePlus" id="Q5M819"/>
<dbReference type="jPOST" id="Q5M819"/>
<dbReference type="PaxDb" id="10116-ENSRNOP00000001228"/>
<dbReference type="Ensembl" id="ENSRNOT00000001228.8">
    <property type="protein sequence ID" value="ENSRNOP00000001228.4"/>
    <property type="gene ID" value="ENSRNOG00000000925.8"/>
</dbReference>
<dbReference type="GeneID" id="304429"/>
<dbReference type="KEGG" id="rno:304429"/>
<dbReference type="AGR" id="RGD:1308764"/>
<dbReference type="CTD" id="5723"/>
<dbReference type="RGD" id="1308764">
    <property type="gene designation" value="Psph"/>
</dbReference>
<dbReference type="eggNOG" id="KOG1615">
    <property type="taxonomic scope" value="Eukaryota"/>
</dbReference>
<dbReference type="GeneTree" id="ENSGT00390000003115"/>
<dbReference type="HOGENOM" id="CLU_036368_2_1_1"/>
<dbReference type="InParanoid" id="Q5M819"/>
<dbReference type="OMA" id="ANYFIGF"/>
<dbReference type="OrthoDB" id="27226at2759"/>
<dbReference type="PhylomeDB" id="Q5M819"/>
<dbReference type="TreeFam" id="TF315024"/>
<dbReference type="BioCyc" id="MetaCyc:MONOMER-10301"/>
<dbReference type="BRENDA" id="3.1.3.3">
    <property type="organism ID" value="5301"/>
</dbReference>
<dbReference type="Reactome" id="R-RNO-977347">
    <property type="pathway name" value="Serine biosynthesis"/>
</dbReference>
<dbReference type="SABIO-RK" id="Q5M819"/>
<dbReference type="UniPathway" id="UPA00135">
    <property type="reaction ID" value="UER00198"/>
</dbReference>
<dbReference type="PRO" id="PR:Q5M819"/>
<dbReference type="Proteomes" id="UP000002494">
    <property type="component" value="Chromosome 12"/>
</dbReference>
<dbReference type="Bgee" id="ENSRNOG00000000925">
    <property type="expression patterns" value="Expressed in pancreas and 19 other cell types or tissues"/>
</dbReference>
<dbReference type="GO" id="GO:0005737">
    <property type="term" value="C:cytoplasm"/>
    <property type="evidence" value="ECO:0000318"/>
    <property type="project" value="GO_Central"/>
</dbReference>
<dbReference type="GO" id="GO:0005829">
    <property type="term" value="C:cytosol"/>
    <property type="evidence" value="ECO:0007669"/>
    <property type="project" value="UniProtKB-SubCell"/>
</dbReference>
<dbReference type="GO" id="GO:0042802">
    <property type="term" value="F:identical protein binding"/>
    <property type="evidence" value="ECO:0000266"/>
    <property type="project" value="RGD"/>
</dbReference>
<dbReference type="GO" id="GO:0036424">
    <property type="term" value="F:L-phosphoserine phosphatase activity"/>
    <property type="evidence" value="ECO:0000250"/>
    <property type="project" value="UniProtKB"/>
</dbReference>
<dbReference type="GO" id="GO:0000287">
    <property type="term" value="F:magnesium ion binding"/>
    <property type="evidence" value="ECO:0000250"/>
    <property type="project" value="UniProtKB"/>
</dbReference>
<dbReference type="GO" id="GO:0042803">
    <property type="term" value="F:protein homodimerization activity"/>
    <property type="evidence" value="ECO:0000266"/>
    <property type="project" value="RGD"/>
</dbReference>
<dbReference type="GO" id="GO:0001701">
    <property type="term" value="P:in utero embryonic development"/>
    <property type="evidence" value="ECO:0000266"/>
    <property type="project" value="RGD"/>
</dbReference>
<dbReference type="GO" id="GO:0006564">
    <property type="term" value="P:L-serine biosynthetic process"/>
    <property type="evidence" value="ECO:0000250"/>
    <property type="project" value="UniProtKB"/>
</dbReference>
<dbReference type="GO" id="GO:0006563">
    <property type="term" value="P:L-serine metabolic process"/>
    <property type="evidence" value="ECO:0000250"/>
    <property type="project" value="UniProtKB"/>
</dbReference>
<dbReference type="GO" id="GO:0009612">
    <property type="term" value="P:response to mechanical stimulus"/>
    <property type="evidence" value="ECO:0000270"/>
    <property type="project" value="RGD"/>
</dbReference>
<dbReference type="GO" id="GO:0031667">
    <property type="term" value="P:response to nutrient levels"/>
    <property type="evidence" value="ECO:0000270"/>
    <property type="project" value="RGD"/>
</dbReference>
<dbReference type="GO" id="GO:0033574">
    <property type="term" value="P:response to testosterone"/>
    <property type="evidence" value="ECO:0000270"/>
    <property type="project" value="RGD"/>
</dbReference>
<dbReference type="CDD" id="cd04309">
    <property type="entry name" value="HAD_PSP_eu"/>
    <property type="match status" value="1"/>
</dbReference>
<dbReference type="FunFam" id="3.40.50.1000:FF:000077">
    <property type="entry name" value="Phosphoserine phosphatase, chloroplastic"/>
    <property type="match status" value="1"/>
</dbReference>
<dbReference type="FunFam" id="3.40.50.1000:FF:000114">
    <property type="entry name" value="Phosphoserine phosphatase, chloroplastic"/>
    <property type="match status" value="1"/>
</dbReference>
<dbReference type="Gene3D" id="3.40.50.1000">
    <property type="entry name" value="HAD superfamily/HAD-like"/>
    <property type="match status" value="2"/>
</dbReference>
<dbReference type="InterPro" id="IPR050582">
    <property type="entry name" value="HAD-like_SerB"/>
</dbReference>
<dbReference type="InterPro" id="IPR036412">
    <property type="entry name" value="HAD-like_sf"/>
</dbReference>
<dbReference type="InterPro" id="IPR023214">
    <property type="entry name" value="HAD_sf"/>
</dbReference>
<dbReference type="InterPro" id="IPR004469">
    <property type="entry name" value="PSP"/>
</dbReference>
<dbReference type="NCBIfam" id="TIGR01488">
    <property type="entry name" value="HAD-SF-IB"/>
    <property type="match status" value="1"/>
</dbReference>
<dbReference type="NCBIfam" id="TIGR00338">
    <property type="entry name" value="serB"/>
    <property type="match status" value="1"/>
</dbReference>
<dbReference type="PANTHER" id="PTHR43344">
    <property type="entry name" value="PHOSPHOSERINE PHOSPHATASE"/>
    <property type="match status" value="1"/>
</dbReference>
<dbReference type="PANTHER" id="PTHR43344:SF2">
    <property type="entry name" value="PHOSPHOSERINE PHOSPHATASE"/>
    <property type="match status" value="1"/>
</dbReference>
<dbReference type="Pfam" id="PF00702">
    <property type="entry name" value="Hydrolase"/>
    <property type="match status" value="1"/>
</dbReference>
<dbReference type="SFLD" id="SFLDG01137">
    <property type="entry name" value="C1.6.1:_Phosphoserine_Phosphat"/>
    <property type="match status" value="1"/>
</dbReference>
<dbReference type="SFLD" id="SFLDG01136">
    <property type="entry name" value="C1.6:_Phosphoserine_Phosphatas"/>
    <property type="match status" value="1"/>
</dbReference>
<dbReference type="SUPFAM" id="SSF56784">
    <property type="entry name" value="HAD-like"/>
    <property type="match status" value="1"/>
</dbReference>
<accession>Q5M819</accession>
<gene>
    <name evidence="3" type="primary">Psph</name>
</gene>
<proteinExistence type="evidence at transcript level"/>
<reference key="1">
    <citation type="journal article" date="2004" name="Genome Res.">
        <title>The status, quality, and expansion of the NIH full-length cDNA project: the Mammalian Gene Collection (MGC).</title>
        <authorList>
            <consortium name="The MGC Project Team"/>
        </authorList>
    </citation>
    <scope>NUCLEOTIDE SEQUENCE [LARGE SCALE MRNA]</scope>
    <source>
        <tissue>Liver</tissue>
    </source>
</reference>
<sequence>MVSHSELRKLFCSADAVCFDVDSTVIREEGIDELAKFCGVEAAVSEMTRRAMGGALPFKDALTERLALIQPSRDQVQRLLAEHPPHLTPGIRELVSRLQERNVQVFLISGGFRSIVEHVAAKLNIPTTNVFANRLKFYFNGEYAGFDETQPTAESGGKGKVIGFLKEKFHFKKIIMIGDGATDMEACPPADAFIGFGGNVIRQQVKDNAKWYITDFVELLGELEE</sequence>
<keyword id="KW-0007">Acetylation</keyword>
<keyword id="KW-0028">Amino-acid biosynthesis</keyword>
<keyword id="KW-0963">Cytoplasm</keyword>
<keyword id="KW-0378">Hydrolase</keyword>
<keyword id="KW-0460">Magnesium</keyword>
<keyword id="KW-0479">Metal-binding</keyword>
<keyword id="KW-1185">Reference proteome</keyword>
<keyword id="KW-0718">Serine biosynthesis</keyword>
<protein>
    <recommendedName>
        <fullName evidence="1">Phosphoserine phosphatase</fullName>
        <shortName evidence="1">PSP</shortName>
        <shortName evidence="1">PSPase</shortName>
        <ecNumber evidence="1">3.1.3.3</ecNumber>
    </recommendedName>
    <alternativeName>
        <fullName evidence="1">O-phosphoserine phosphohydrolase</fullName>
    </alternativeName>
</protein>
<evidence type="ECO:0000250" key="1">
    <source>
        <dbReference type="UniProtKB" id="P78330"/>
    </source>
</evidence>
<evidence type="ECO:0000305" key="2"/>
<evidence type="ECO:0000312" key="3">
    <source>
        <dbReference type="RGD" id="1308764"/>
    </source>
</evidence>
<comment type="function">
    <text evidence="1">Catalyzes the last irreversible step in the biosynthesis of L-serine from carbohydrates, the dephosphorylation of O-phospho-L-serine to L-serine. L-serine can then be used in protein synthesis, to produce other amino acids, in nucleotide metabolism or in glutathione synthesis, or can be racemized to D-serine, a neuromodulator. May also act on O-phospho-D-serine.</text>
</comment>
<comment type="catalytic activity">
    <reaction evidence="1">
        <text>O-phospho-L-serine + H2O = L-serine + phosphate</text>
        <dbReference type="Rhea" id="RHEA:21208"/>
        <dbReference type="ChEBI" id="CHEBI:15377"/>
        <dbReference type="ChEBI" id="CHEBI:33384"/>
        <dbReference type="ChEBI" id="CHEBI:43474"/>
        <dbReference type="ChEBI" id="CHEBI:57524"/>
        <dbReference type="EC" id="3.1.3.3"/>
    </reaction>
    <physiologicalReaction direction="left-to-right" evidence="1">
        <dbReference type="Rhea" id="RHEA:21209"/>
    </physiologicalReaction>
</comment>
<comment type="catalytic activity">
    <reaction evidence="1">
        <text>O-phospho-D-serine + H2O = D-serine + phosphate</text>
        <dbReference type="Rhea" id="RHEA:24873"/>
        <dbReference type="ChEBI" id="CHEBI:15377"/>
        <dbReference type="ChEBI" id="CHEBI:35247"/>
        <dbReference type="ChEBI" id="CHEBI:43474"/>
        <dbReference type="ChEBI" id="CHEBI:58680"/>
        <dbReference type="EC" id="3.1.3.3"/>
    </reaction>
    <physiologicalReaction direction="left-to-right" evidence="1">
        <dbReference type="Rhea" id="RHEA:24874"/>
    </physiologicalReaction>
</comment>
<comment type="cofactor">
    <cofactor evidence="1">
        <name>Mg(2+)</name>
        <dbReference type="ChEBI" id="CHEBI:18420"/>
    </cofactor>
    <text evidence="1">Binds 1 Mg(2+) ion per subunit.</text>
</comment>
<comment type="pathway">
    <text evidence="1">Amino-acid biosynthesis; L-serine biosynthesis; L-serine from 3-phospho-D-glycerate: step 3/3.</text>
</comment>
<comment type="subunit">
    <text evidence="1">Homodimer.</text>
</comment>
<comment type="subcellular location">
    <subcellularLocation>
        <location evidence="1">Cytoplasm</location>
        <location evidence="1">Cytosol</location>
    </subcellularLocation>
</comment>
<comment type="similarity">
    <text evidence="2">Belongs to the HAD-like hydrolase superfamily. SerB family.</text>
</comment>